<proteinExistence type="inferred from homology"/>
<dbReference type="EC" id="1.4.4.2" evidence="1"/>
<dbReference type="EMBL" id="CP000572">
    <property type="protein sequence ID" value="ABN89009.1"/>
    <property type="molecule type" value="Genomic_DNA"/>
</dbReference>
<dbReference type="RefSeq" id="WP_004535539.1">
    <property type="nucleotide sequence ID" value="NC_009076.1"/>
</dbReference>
<dbReference type="SMR" id="A3P0U7"/>
<dbReference type="KEGG" id="bpl:BURPS1106A_4000"/>
<dbReference type="HOGENOM" id="CLU_004620_1_1_4"/>
<dbReference type="Proteomes" id="UP000006738">
    <property type="component" value="Chromosome I"/>
</dbReference>
<dbReference type="GO" id="GO:0005829">
    <property type="term" value="C:cytosol"/>
    <property type="evidence" value="ECO:0007669"/>
    <property type="project" value="TreeGrafter"/>
</dbReference>
<dbReference type="GO" id="GO:0005960">
    <property type="term" value="C:glycine cleavage complex"/>
    <property type="evidence" value="ECO:0007669"/>
    <property type="project" value="TreeGrafter"/>
</dbReference>
<dbReference type="GO" id="GO:0016594">
    <property type="term" value="F:glycine binding"/>
    <property type="evidence" value="ECO:0007669"/>
    <property type="project" value="TreeGrafter"/>
</dbReference>
<dbReference type="GO" id="GO:0004375">
    <property type="term" value="F:glycine dehydrogenase (decarboxylating) activity"/>
    <property type="evidence" value="ECO:0007669"/>
    <property type="project" value="UniProtKB-EC"/>
</dbReference>
<dbReference type="GO" id="GO:0030170">
    <property type="term" value="F:pyridoxal phosphate binding"/>
    <property type="evidence" value="ECO:0007669"/>
    <property type="project" value="TreeGrafter"/>
</dbReference>
<dbReference type="GO" id="GO:0019464">
    <property type="term" value="P:glycine decarboxylation via glycine cleavage system"/>
    <property type="evidence" value="ECO:0007669"/>
    <property type="project" value="UniProtKB-UniRule"/>
</dbReference>
<dbReference type="CDD" id="cd00613">
    <property type="entry name" value="GDC-P"/>
    <property type="match status" value="2"/>
</dbReference>
<dbReference type="FunFam" id="3.40.640.10:FF:000005">
    <property type="entry name" value="Glycine dehydrogenase (decarboxylating), mitochondrial"/>
    <property type="match status" value="1"/>
</dbReference>
<dbReference type="FunFam" id="3.90.1150.10:FF:000007">
    <property type="entry name" value="Glycine dehydrogenase (decarboxylating), mitochondrial"/>
    <property type="match status" value="1"/>
</dbReference>
<dbReference type="FunFam" id="3.40.640.10:FF:000007">
    <property type="entry name" value="glycine dehydrogenase (Decarboxylating), mitochondrial"/>
    <property type="match status" value="1"/>
</dbReference>
<dbReference type="Gene3D" id="3.90.1150.10">
    <property type="entry name" value="Aspartate Aminotransferase, domain 1"/>
    <property type="match status" value="2"/>
</dbReference>
<dbReference type="Gene3D" id="3.40.640.10">
    <property type="entry name" value="Type I PLP-dependent aspartate aminotransferase-like (Major domain)"/>
    <property type="match status" value="2"/>
</dbReference>
<dbReference type="HAMAP" id="MF_00711">
    <property type="entry name" value="GcvP"/>
    <property type="match status" value="1"/>
</dbReference>
<dbReference type="InterPro" id="IPR003437">
    <property type="entry name" value="GcvP"/>
</dbReference>
<dbReference type="InterPro" id="IPR049316">
    <property type="entry name" value="GDC-P_C"/>
</dbReference>
<dbReference type="InterPro" id="IPR049315">
    <property type="entry name" value="GDC-P_N"/>
</dbReference>
<dbReference type="InterPro" id="IPR020581">
    <property type="entry name" value="GDC_P"/>
</dbReference>
<dbReference type="InterPro" id="IPR015424">
    <property type="entry name" value="PyrdxlP-dep_Trfase"/>
</dbReference>
<dbReference type="InterPro" id="IPR015421">
    <property type="entry name" value="PyrdxlP-dep_Trfase_major"/>
</dbReference>
<dbReference type="InterPro" id="IPR015422">
    <property type="entry name" value="PyrdxlP-dep_Trfase_small"/>
</dbReference>
<dbReference type="NCBIfam" id="TIGR00461">
    <property type="entry name" value="gcvP"/>
    <property type="match status" value="1"/>
</dbReference>
<dbReference type="NCBIfam" id="NF003346">
    <property type="entry name" value="PRK04366.1"/>
    <property type="match status" value="1"/>
</dbReference>
<dbReference type="PANTHER" id="PTHR11773:SF1">
    <property type="entry name" value="GLYCINE DEHYDROGENASE (DECARBOXYLATING), MITOCHONDRIAL"/>
    <property type="match status" value="1"/>
</dbReference>
<dbReference type="PANTHER" id="PTHR11773">
    <property type="entry name" value="GLYCINE DEHYDROGENASE, DECARBOXYLATING"/>
    <property type="match status" value="1"/>
</dbReference>
<dbReference type="Pfam" id="PF21478">
    <property type="entry name" value="GcvP2_C"/>
    <property type="match status" value="1"/>
</dbReference>
<dbReference type="Pfam" id="PF02347">
    <property type="entry name" value="GDC-P"/>
    <property type="match status" value="2"/>
</dbReference>
<dbReference type="SUPFAM" id="SSF53383">
    <property type="entry name" value="PLP-dependent transferases"/>
    <property type="match status" value="2"/>
</dbReference>
<feature type="chain" id="PRO_1000045574" description="Glycine dehydrogenase (decarboxylating)">
    <location>
        <begin position="1"/>
        <end position="970"/>
    </location>
</feature>
<feature type="modified residue" description="N6-(pyridoxal phosphate)lysine" evidence="1">
    <location>
        <position position="723"/>
    </location>
</feature>
<organism>
    <name type="scientific">Burkholderia pseudomallei (strain 1106a)</name>
    <dbReference type="NCBI Taxonomy" id="357348"/>
    <lineage>
        <taxon>Bacteria</taxon>
        <taxon>Pseudomonadati</taxon>
        <taxon>Pseudomonadota</taxon>
        <taxon>Betaproteobacteria</taxon>
        <taxon>Burkholderiales</taxon>
        <taxon>Burkholderiaceae</taxon>
        <taxon>Burkholderia</taxon>
        <taxon>pseudomallei group</taxon>
    </lineage>
</organism>
<reference key="1">
    <citation type="journal article" date="2010" name="Genome Biol. Evol.">
        <title>Continuing evolution of Burkholderia mallei through genome reduction and large-scale rearrangements.</title>
        <authorList>
            <person name="Losada L."/>
            <person name="Ronning C.M."/>
            <person name="DeShazer D."/>
            <person name="Woods D."/>
            <person name="Fedorova N."/>
            <person name="Kim H.S."/>
            <person name="Shabalina S.A."/>
            <person name="Pearson T.R."/>
            <person name="Brinkac L."/>
            <person name="Tan P."/>
            <person name="Nandi T."/>
            <person name="Crabtree J."/>
            <person name="Badger J."/>
            <person name="Beckstrom-Sternberg S."/>
            <person name="Saqib M."/>
            <person name="Schutzer S.E."/>
            <person name="Keim P."/>
            <person name="Nierman W.C."/>
        </authorList>
    </citation>
    <scope>NUCLEOTIDE SEQUENCE [LARGE SCALE GENOMIC DNA]</scope>
    <source>
        <strain>1106a</strain>
    </source>
</reference>
<accession>A3P0U7</accession>
<comment type="function">
    <text evidence="1">The glycine cleavage system catalyzes the degradation of glycine. The P protein binds the alpha-amino group of glycine through its pyridoxal phosphate cofactor; CO(2) is released and the remaining methylamine moiety is then transferred to the lipoamide cofactor of the H protein.</text>
</comment>
<comment type="catalytic activity">
    <reaction evidence="1">
        <text>N(6)-[(R)-lipoyl]-L-lysyl-[glycine-cleavage complex H protein] + glycine + H(+) = N(6)-[(R)-S(8)-aminomethyldihydrolipoyl]-L-lysyl-[glycine-cleavage complex H protein] + CO2</text>
        <dbReference type="Rhea" id="RHEA:24304"/>
        <dbReference type="Rhea" id="RHEA-COMP:10494"/>
        <dbReference type="Rhea" id="RHEA-COMP:10495"/>
        <dbReference type="ChEBI" id="CHEBI:15378"/>
        <dbReference type="ChEBI" id="CHEBI:16526"/>
        <dbReference type="ChEBI" id="CHEBI:57305"/>
        <dbReference type="ChEBI" id="CHEBI:83099"/>
        <dbReference type="ChEBI" id="CHEBI:83143"/>
        <dbReference type="EC" id="1.4.4.2"/>
    </reaction>
</comment>
<comment type="cofactor">
    <cofactor evidence="1">
        <name>pyridoxal 5'-phosphate</name>
        <dbReference type="ChEBI" id="CHEBI:597326"/>
    </cofactor>
</comment>
<comment type="subunit">
    <text evidence="1">The glycine cleavage system is composed of four proteins: P, T, L and H.</text>
</comment>
<comment type="similarity">
    <text evidence="1">Belongs to the GcvP family.</text>
</comment>
<sequence>MKLEHPDRLMNRTPLSLAALETHDAFAERHIGPDAASQQAMLDTLGFATRAALIDAVIPASIRRAETLPLGPFAQPKSEAEALAALRALADKNQVFRSYIGQGYYDTHTPAVILRNVLENPAWYTAYTPYQPEISQGRLEALLNFQQMVADLTGLEISNASLLDEATAAAEAMTLLQRVGKPQSNVFYVADDVLPQTLEVIKTRAKPIGIEVKSGPAADAAAANAFGVLLQYPGANGDVRDYRALADAIHAAGGHVVVAADILALTVLMPPGEWGADVAVGNTQRFGVPMGFGGPHAAYMAVRDEFKRQMPGRLVGVTVDAQGKPALRLALQTREQHIRREKATSNVCTAQALLAIMASMYAVYHGPRGLKTIALRVNRIAALLAAGIRHLGYATVNDTFFDTLTIDTGARTAQLHAFAQAKRINLRRAGDTRVGVSVDETTTRADLADLLTIFAQAAGATAPDIDALDAGLLPAPALPPSLERTSAYLTHHVFNRHHSETEMLRYLRSLSDKDLALDRSMIPLGSCTMKLNATSEMLPVTWPEFGRIHPFAPAEQTVGYREMIDQLEQMLVAATGYAAVSLQPNAGSQGEYAGLLIIHAYHESRGESHRDVCLIPASAHGTNPASAHMAGMKVVVVACDAQGNVDIADLKAKADAHSHDLAAIMITYPSTHGVFEQNVREICEIVHAHGGQVYVDGANMNAMVGLTAPGQFGGDVSHLNLHKTFCIPHGGGGPGVGPHLAKFLPNQRSTGYARGEDGIGAVSAAPYGSASILPISWMYIAMMGAKNLTAATETAILNANYIAKRLAPHYPVLYSGPGGLVAHECILDLRPIKDSSGITVDDVAKRLMDYGFHAPTMSFPVPGTLMVEPTESESQEELDRFIAAMIAIRDEIRAVEEGRADREDNPLRHAPHTAAVVTANEWPHAYSREQAAFPVASLVANKYWPPVGRADNAYGDRNLFCSCVPVSDYA</sequence>
<keyword id="KW-0560">Oxidoreductase</keyword>
<keyword id="KW-0663">Pyridoxal phosphate</keyword>
<protein>
    <recommendedName>
        <fullName evidence="1">Glycine dehydrogenase (decarboxylating)</fullName>
        <ecNumber evidence="1">1.4.4.2</ecNumber>
    </recommendedName>
    <alternativeName>
        <fullName evidence="1">Glycine cleavage system P-protein</fullName>
    </alternativeName>
    <alternativeName>
        <fullName evidence="1">Glycine decarboxylase</fullName>
    </alternativeName>
    <alternativeName>
        <fullName evidence="1">Glycine dehydrogenase (aminomethyl-transferring)</fullName>
    </alternativeName>
</protein>
<gene>
    <name evidence="1" type="primary">gcvP</name>
    <name type="ordered locus">BURPS1106A_4000</name>
</gene>
<evidence type="ECO:0000255" key="1">
    <source>
        <dbReference type="HAMAP-Rule" id="MF_00711"/>
    </source>
</evidence>
<name>GCSP_BURP0</name>